<organism>
    <name type="scientific">Saccharomyces cerevisiae (strain ATCC 204508 / S288c)</name>
    <name type="common">Baker's yeast</name>
    <dbReference type="NCBI Taxonomy" id="559292"/>
    <lineage>
        <taxon>Eukaryota</taxon>
        <taxon>Fungi</taxon>
        <taxon>Dikarya</taxon>
        <taxon>Ascomycota</taxon>
        <taxon>Saccharomycotina</taxon>
        <taxon>Saccharomycetes</taxon>
        <taxon>Saccharomycetales</taxon>
        <taxon>Saccharomycetaceae</taxon>
        <taxon>Saccharomyces</taxon>
    </lineage>
</organism>
<protein>
    <recommendedName>
        <fullName>Pre-mRNA-splicing factor PRP46</fullName>
    </recommendedName>
    <alternativeName>
        <fullName>Complexed with CEF1 protein 1</fullName>
    </alternativeName>
    <alternativeName>
        <fullName>PRP nineteen-associated complex protein 50</fullName>
    </alternativeName>
    <alternativeName>
        <fullName>PRP19-associated complex protein 50</fullName>
    </alternativeName>
    <alternativeName>
        <fullName>Pre-mRNA-processing protein 46</fullName>
    </alternativeName>
</protein>
<keyword id="KW-0002">3D-structure</keyword>
<keyword id="KW-0963">Cytoplasm</keyword>
<keyword id="KW-0903">Direct protein sequencing</keyword>
<keyword id="KW-0507">mRNA processing</keyword>
<keyword id="KW-0508">mRNA splicing</keyword>
<keyword id="KW-0539">Nucleus</keyword>
<keyword id="KW-1185">Reference proteome</keyword>
<keyword id="KW-0677">Repeat</keyword>
<keyword id="KW-0747">Spliceosome</keyword>
<keyword id="KW-0853">WD repeat</keyword>
<dbReference type="EMBL" id="X96770">
    <property type="protein sequence ID" value="CAA65570.1"/>
    <property type="molecule type" value="Genomic_DNA"/>
</dbReference>
<dbReference type="EMBL" id="Z73507">
    <property type="protein sequence ID" value="CAA97856.1"/>
    <property type="molecule type" value="Genomic_DNA"/>
</dbReference>
<dbReference type="EMBL" id="BK006949">
    <property type="protein sequence ID" value="DAA11284.1"/>
    <property type="molecule type" value="Genomic_DNA"/>
</dbReference>
<dbReference type="PIR" id="S65162">
    <property type="entry name" value="S65162"/>
</dbReference>
<dbReference type="RefSeq" id="NP_015174.1">
    <property type="nucleotide sequence ID" value="NM_001183965.1"/>
</dbReference>
<dbReference type="PDB" id="5GM6">
    <property type="method" value="EM"/>
    <property type="resolution" value="3.50 A"/>
    <property type="chains" value="O=1-451"/>
</dbReference>
<dbReference type="PDB" id="5GMK">
    <property type="method" value="EM"/>
    <property type="resolution" value="3.40 A"/>
    <property type="chains" value="O=1-451"/>
</dbReference>
<dbReference type="PDB" id="5LJ3">
    <property type="method" value="EM"/>
    <property type="resolution" value="3.80 A"/>
    <property type="chains" value="J=1-451"/>
</dbReference>
<dbReference type="PDB" id="5LJ5">
    <property type="method" value="EM"/>
    <property type="resolution" value="3.80 A"/>
    <property type="chains" value="J=1-451"/>
</dbReference>
<dbReference type="PDB" id="5LQW">
    <property type="method" value="EM"/>
    <property type="resolution" value="5.80 A"/>
    <property type="chains" value="K=1-451"/>
</dbReference>
<dbReference type="PDB" id="5MPS">
    <property type="method" value="EM"/>
    <property type="resolution" value="3.85 A"/>
    <property type="chains" value="J=1-451"/>
</dbReference>
<dbReference type="PDB" id="5MQ0">
    <property type="method" value="EM"/>
    <property type="resolution" value="4.17 A"/>
    <property type="chains" value="J=1-451"/>
</dbReference>
<dbReference type="PDB" id="5WSG">
    <property type="method" value="EM"/>
    <property type="resolution" value="4.00 A"/>
    <property type="chains" value="O=1-451"/>
</dbReference>
<dbReference type="PDB" id="5Y88">
    <property type="method" value="EM"/>
    <property type="resolution" value="3.70 A"/>
    <property type="chains" value="O=1-451"/>
</dbReference>
<dbReference type="PDB" id="5YLZ">
    <property type="method" value="EM"/>
    <property type="resolution" value="3.60 A"/>
    <property type="chains" value="O=1-451"/>
</dbReference>
<dbReference type="PDB" id="6BK8">
    <property type="method" value="EM"/>
    <property type="resolution" value="3.30 A"/>
    <property type="chains" value="D=1-451"/>
</dbReference>
<dbReference type="PDB" id="6EXN">
    <property type="method" value="EM"/>
    <property type="resolution" value="3.70 A"/>
    <property type="chains" value="J=1-451"/>
</dbReference>
<dbReference type="PDB" id="6J6G">
    <property type="method" value="EM"/>
    <property type="resolution" value="3.20 A"/>
    <property type="chains" value="O=1-451"/>
</dbReference>
<dbReference type="PDB" id="6J6H">
    <property type="method" value="EM"/>
    <property type="resolution" value="3.60 A"/>
    <property type="chains" value="O=1-451"/>
</dbReference>
<dbReference type="PDB" id="6J6N">
    <property type="method" value="EM"/>
    <property type="resolution" value="3.86 A"/>
    <property type="chains" value="O=1-451"/>
</dbReference>
<dbReference type="PDB" id="6J6Q">
    <property type="method" value="EM"/>
    <property type="resolution" value="3.70 A"/>
    <property type="chains" value="O=1-451"/>
</dbReference>
<dbReference type="PDB" id="9DTR">
    <property type="method" value="EM"/>
    <property type="resolution" value="2.31 A"/>
    <property type="chains" value="J=1-451"/>
</dbReference>
<dbReference type="PDBsum" id="5GM6"/>
<dbReference type="PDBsum" id="5GMK"/>
<dbReference type="PDBsum" id="5LJ3"/>
<dbReference type="PDBsum" id="5LJ5"/>
<dbReference type="PDBsum" id="5LQW"/>
<dbReference type="PDBsum" id="5MPS"/>
<dbReference type="PDBsum" id="5MQ0"/>
<dbReference type="PDBsum" id="5WSG"/>
<dbReference type="PDBsum" id="5Y88"/>
<dbReference type="PDBsum" id="5YLZ"/>
<dbReference type="PDBsum" id="6BK8"/>
<dbReference type="PDBsum" id="6EXN"/>
<dbReference type="PDBsum" id="6J6G"/>
<dbReference type="PDBsum" id="6J6H"/>
<dbReference type="PDBsum" id="6J6N"/>
<dbReference type="PDBsum" id="6J6Q"/>
<dbReference type="PDBsum" id="9DTR"/>
<dbReference type="EMDB" id="EMD-0686"/>
<dbReference type="EMDB" id="EMD-0687"/>
<dbReference type="EMDB" id="EMD-0691"/>
<dbReference type="EMDB" id="EMD-0692"/>
<dbReference type="EMDB" id="EMD-3539"/>
<dbReference type="EMDB" id="EMD-3541"/>
<dbReference type="EMDB" id="EMD-3979"/>
<dbReference type="EMDB" id="EMD-4057"/>
<dbReference type="EMDB" id="EMD-47157"/>
<dbReference type="EMDB" id="EMD-6817"/>
<dbReference type="EMDB" id="EMD-6839"/>
<dbReference type="EMDB" id="EMD-7109"/>
<dbReference type="EMDB" id="EMD-9524"/>
<dbReference type="EMDB" id="EMD-9525"/>
<dbReference type="SMR" id="Q12417"/>
<dbReference type="BioGRID" id="36032">
    <property type="interactions" value="235"/>
</dbReference>
<dbReference type="ComplexPortal" id="CPX-1651">
    <property type="entry name" value="PRP19-associated complex"/>
</dbReference>
<dbReference type="DIP" id="DIP-3994N"/>
<dbReference type="FunCoup" id="Q12417">
    <property type="interactions" value="1148"/>
</dbReference>
<dbReference type="IntAct" id="Q12417">
    <property type="interactions" value="67"/>
</dbReference>
<dbReference type="MINT" id="Q12417"/>
<dbReference type="STRING" id="4932.YPL151C"/>
<dbReference type="iPTMnet" id="Q12417"/>
<dbReference type="PaxDb" id="4932-YPL151C"/>
<dbReference type="PeptideAtlas" id="Q12417"/>
<dbReference type="EnsemblFungi" id="YPL151C_mRNA">
    <property type="protein sequence ID" value="YPL151C"/>
    <property type="gene ID" value="YPL151C"/>
</dbReference>
<dbReference type="GeneID" id="855952"/>
<dbReference type="KEGG" id="sce:YPL151C"/>
<dbReference type="AGR" id="SGD:S000006072"/>
<dbReference type="SGD" id="S000006072">
    <property type="gene designation" value="PRP46"/>
</dbReference>
<dbReference type="VEuPathDB" id="FungiDB:YPL151C"/>
<dbReference type="eggNOG" id="KOG0285">
    <property type="taxonomic scope" value="Eukaryota"/>
</dbReference>
<dbReference type="GeneTree" id="ENSGT00940000155316"/>
<dbReference type="HOGENOM" id="CLU_000288_72_0_1"/>
<dbReference type="InParanoid" id="Q12417"/>
<dbReference type="OMA" id="FAMCFDQ"/>
<dbReference type="OrthoDB" id="10256122at2759"/>
<dbReference type="BioCyc" id="YEAST:G3O-34048-MONOMER"/>
<dbReference type="BioGRID-ORCS" id="855952">
    <property type="hits" value="3 hits in 10 CRISPR screens"/>
</dbReference>
<dbReference type="PRO" id="PR:Q12417"/>
<dbReference type="Proteomes" id="UP000002311">
    <property type="component" value="Chromosome XVI"/>
</dbReference>
<dbReference type="RNAct" id="Q12417">
    <property type="molecule type" value="protein"/>
</dbReference>
<dbReference type="GO" id="GO:0071013">
    <property type="term" value="C:catalytic step 2 spliceosome"/>
    <property type="evidence" value="ECO:0000318"/>
    <property type="project" value="GO_Central"/>
</dbReference>
<dbReference type="GO" id="GO:0005737">
    <property type="term" value="C:cytoplasm"/>
    <property type="evidence" value="ECO:0007669"/>
    <property type="project" value="UniProtKB-SubCell"/>
</dbReference>
<dbReference type="GO" id="GO:0000974">
    <property type="term" value="C:Prp19 complex"/>
    <property type="evidence" value="ECO:0000353"/>
    <property type="project" value="ComplexPortal"/>
</dbReference>
<dbReference type="GO" id="GO:0005681">
    <property type="term" value="C:spliceosomal complex"/>
    <property type="evidence" value="ECO:0000314"/>
    <property type="project" value="SGD"/>
</dbReference>
<dbReference type="GO" id="GO:0000398">
    <property type="term" value="P:mRNA splicing, via spliceosome"/>
    <property type="evidence" value="ECO:0000315"/>
    <property type="project" value="SGD"/>
</dbReference>
<dbReference type="CDD" id="cd00200">
    <property type="entry name" value="WD40"/>
    <property type="match status" value="1"/>
</dbReference>
<dbReference type="FunFam" id="2.130.10.10:FF:000012">
    <property type="entry name" value="Putative pleiotropic regulator 1"/>
    <property type="match status" value="1"/>
</dbReference>
<dbReference type="Gene3D" id="2.130.10.10">
    <property type="entry name" value="YVTN repeat-like/Quinoprotein amine dehydrogenase"/>
    <property type="match status" value="1"/>
</dbReference>
<dbReference type="InterPro" id="IPR020472">
    <property type="entry name" value="G-protein_beta_WD-40_rep"/>
</dbReference>
<dbReference type="InterPro" id="IPR045241">
    <property type="entry name" value="Prp46/PLRG1-like"/>
</dbReference>
<dbReference type="InterPro" id="IPR015943">
    <property type="entry name" value="WD40/YVTN_repeat-like_dom_sf"/>
</dbReference>
<dbReference type="InterPro" id="IPR019775">
    <property type="entry name" value="WD40_repeat_CS"/>
</dbReference>
<dbReference type="InterPro" id="IPR036322">
    <property type="entry name" value="WD40_repeat_dom_sf"/>
</dbReference>
<dbReference type="InterPro" id="IPR001680">
    <property type="entry name" value="WD40_rpt"/>
</dbReference>
<dbReference type="PANTHER" id="PTHR19923:SF0">
    <property type="entry name" value="PLEIOTROPIC REGULATOR 1"/>
    <property type="match status" value="1"/>
</dbReference>
<dbReference type="PANTHER" id="PTHR19923">
    <property type="entry name" value="WD40 REPEAT PROTEINPRL1/PRL2-RELATED"/>
    <property type="match status" value="1"/>
</dbReference>
<dbReference type="Pfam" id="PF00400">
    <property type="entry name" value="WD40"/>
    <property type="match status" value="5"/>
</dbReference>
<dbReference type="PRINTS" id="PR00320">
    <property type="entry name" value="GPROTEINBRPT"/>
</dbReference>
<dbReference type="SMART" id="SM00320">
    <property type="entry name" value="WD40"/>
    <property type="match status" value="7"/>
</dbReference>
<dbReference type="SUPFAM" id="SSF50978">
    <property type="entry name" value="WD40 repeat-like"/>
    <property type="match status" value="1"/>
</dbReference>
<dbReference type="PROSITE" id="PS00678">
    <property type="entry name" value="WD_REPEATS_1"/>
    <property type="match status" value="2"/>
</dbReference>
<dbReference type="PROSITE" id="PS50082">
    <property type="entry name" value="WD_REPEATS_2"/>
    <property type="match status" value="4"/>
</dbReference>
<dbReference type="PROSITE" id="PS50294">
    <property type="entry name" value="WD_REPEATS_REGION"/>
    <property type="match status" value="1"/>
</dbReference>
<gene>
    <name type="primary">PRP46</name>
    <name type="synonym">CWC1</name>
    <name type="synonym">NTC50</name>
    <name type="ordered locus">YPL151C</name>
    <name type="ORF">P2594</name>
</gene>
<comment type="function">
    <text evidence="1 4">Involved in pre-mRNA splicing. May also be required for cell cycle progression at G2/M (By similarity).</text>
</comment>
<comment type="subunit">
    <text evidence="2 3 4">Belongs to the CWC complex (or CEF1-associated complex), a spliceosome subcomplex composed of the U2, U5 and U6 snRNAs and at least BUD13, BUD31, BRR2, CDC40, CEF1, CLF1, CUS1, CWC2, CWC15, CWC21, CWC22, CWC23, CWC24, CWC25, CWC27, ECM2, HSH155, IST3, ISY1, LEA1, MSL1, NTC20, PRP8, PRP9, PRP11, PRP19, PRP21, PRP22, PRP45, PRP46, SLU7, SMB1, SMD1, SMD2, SMD3, SMX2, SMX3, SNT309, SNU114, SPP2, SYF1, SYF2, RSE1 and YJU2. Interacts with CEF1, CLF1, NTC20, PRP45 and SYF1.</text>
</comment>
<comment type="interaction">
    <interactant intactId="EBI-710">
        <id>Q12417</id>
    </interactant>
    <interactant intactId="EBI-20640">
        <id>P28004</id>
        <label>PRP45</label>
    </interactant>
    <organismsDiffer>false</organismsDiffer>
    <experiments>5</experiments>
</comment>
<comment type="subcellular location">
    <subcellularLocation>
        <location evidence="5">Cytoplasm</location>
    </subcellularLocation>
    <subcellularLocation>
        <location evidence="5">Nucleus</location>
    </subcellularLocation>
</comment>
<comment type="miscellaneous">
    <text evidence="6">Present with 1770 molecules/cell in log phase SD medium.</text>
</comment>
<comment type="similarity">
    <text evidence="7">Belongs to the WD repeat PRL1/PRL2 family.</text>
</comment>
<proteinExistence type="evidence at protein level"/>
<accession>Q12417</accession>
<accession>D6W3L8</accession>
<name>PRP46_YEAST</name>
<feature type="chain" id="PRO_0000051169" description="Pre-mRNA-splicing factor PRP46">
    <location>
        <begin position="1"/>
        <end position="451"/>
    </location>
</feature>
<feature type="repeat" description="WD 1">
    <location>
        <begin position="137"/>
        <end position="168"/>
    </location>
</feature>
<feature type="repeat" description="WD 2">
    <location>
        <begin position="180"/>
        <end position="210"/>
    </location>
</feature>
<feature type="repeat" description="WD 3">
    <location>
        <begin position="222"/>
        <end position="252"/>
    </location>
</feature>
<feature type="repeat" description="WD 4">
    <location>
        <begin position="264"/>
        <end position="294"/>
    </location>
</feature>
<feature type="repeat" description="WD 5">
    <location>
        <begin position="306"/>
        <end position="335"/>
    </location>
</feature>
<feature type="repeat" description="WD 6">
    <location>
        <begin position="348"/>
        <end position="377"/>
    </location>
</feature>
<feature type="repeat" description="WD 7">
    <location>
        <begin position="397"/>
        <end position="427"/>
    </location>
</feature>
<feature type="helix" evidence="10">
    <location>
        <begin position="12"/>
        <end position="25"/>
    </location>
</feature>
<feature type="helix" evidence="10">
    <location>
        <begin position="27"/>
        <end position="30"/>
    </location>
</feature>
<feature type="helix" evidence="10">
    <location>
        <begin position="47"/>
        <end position="57"/>
    </location>
</feature>
<feature type="helix" evidence="10">
    <location>
        <begin position="97"/>
        <end position="101"/>
    </location>
</feature>
<feature type="strand" evidence="9">
    <location>
        <begin position="105"/>
        <end position="110"/>
    </location>
</feature>
<feature type="helix" evidence="10">
    <location>
        <begin position="111"/>
        <end position="120"/>
    </location>
</feature>
<feature type="strand" evidence="10">
    <location>
        <begin position="129"/>
        <end position="136"/>
    </location>
</feature>
<feature type="strand" evidence="10">
    <location>
        <begin position="142"/>
        <end position="147"/>
    </location>
</feature>
<feature type="turn" evidence="10">
    <location>
        <begin position="149"/>
        <end position="151"/>
    </location>
</feature>
<feature type="strand" evidence="10">
    <location>
        <begin position="154"/>
        <end position="159"/>
    </location>
</feature>
<feature type="strand" evidence="10">
    <location>
        <begin position="162"/>
        <end position="168"/>
    </location>
</feature>
<feature type="turn" evidence="10">
    <location>
        <begin position="169"/>
        <end position="171"/>
    </location>
</feature>
<feature type="strand" evidence="10">
    <location>
        <begin position="174"/>
        <end position="179"/>
    </location>
</feature>
<feature type="strand" evidence="10">
    <location>
        <begin position="185"/>
        <end position="190"/>
    </location>
</feature>
<feature type="strand" evidence="10">
    <location>
        <begin position="192"/>
        <end position="201"/>
    </location>
</feature>
<feature type="strand" evidence="8">
    <location>
        <begin position="202"/>
        <end position="204"/>
    </location>
</feature>
<feature type="strand" evidence="10">
    <location>
        <begin position="206"/>
        <end position="210"/>
    </location>
</feature>
<feature type="turn" evidence="10">
    <location>
        <begin position="211"/>
        <end position="213"/>
    </location>
</feature>
<feature type="strand" evidence="10">
    <location>
        <begin position="214"/>
        <end position="220"/>
    </location>
</feature>
<feature type="strand" evidence="10">
    <location>
        <begin position="227"/>
        <end position="232"/>
    </location>
</feature>
<feature type="strand" evidence="10">
    <location>
        <begin position="234"/>
        <end position="243"/>
    </location>
</feature>
<feature type="strand" evidence="10">
    <location>
        <begin position="246"/>
        <end position="252"/>
    </location>
</feature>
<feature type="turn" evidence="10">
    <location>
        <begin position="253"/>
        <end position="255"/>
    </location>
</feature>
<feature type="strand" evidence="10">
    <location>
        <begin position="258"/>
        <end position="263"/>
    </location>
</feature>
<feature type="strand" evidence="10">
    <location>
        <begin position="269"/>
        <end position="274"/>
    </location>
</feature>
<feature type="strand" evidence="10">
    <location>
        <begin position="276"/>
        <end position="279"/>
    </location>
</feature>
<feature type="strand" evidence="10">
    <location>
        <begin position="281"/>
        <end position="285"/>
    </location>
</feature>
<feature type="strand" evidence="10">
    <location>
        <begin position="290"/>
        <end position="294"/>
    </location>
</feature>
<feature type="turn" evidence="10">
    <location>
        <begin position="295"/>
        <end position="298"/>
    </location>
</feature>
<feature type="strand" evidence="10">
    <location>
        <begin position="299"/>
        <end position="304"/>
    </location>
</feature>
<feature type="strand" evidence="10">
    <location>
        <begin position="313"/>
        <end position="316"/>
    </location>
</feature>
<feature type="strand" evidence="10">
    <location>
        <begin position="318"/>
        <end position="327"/>
    </location>
</feature>
<feature type="strand" evidence="10">
    <location>
        <begin position="330"/>
        <end position="335"/>
    </location>
</feature>
<feature type="turn" evidence="10">
    <location>
        <begin position="336"/>
        <end position="339"/>
    </location>
</feature>
<feature type="strand" evidence="10">
    <location>
        <begin position="340"/>
        <end position="344"/>
    </location>
</feature>
<feature type="strand" evidence="10">
    <location>
        <begin position="353"/>
        <end position="358"/>
    </location>
</feature>
<feature type="strand" evidence="10">
    <location>
        <begin position="362"/>
        <end position="368"/>
    </location>
</feature>
<feature type="strand" evidence="10">
    <location>
        <begin position="371"/>
        <end position="377"/>
    </location>
</feature>
<feature type="turn" evidence="10">
    <location>
        <begin position="378"/>
        <end position="380"/>
    </location>
</feature>
<feature type="strand" evidence="10">
    <location>
        <begin position="383"/>
        <end position="388"/>
    </location>
</feature>
<feature type="helix" evidence="10">
    <location>
        <begin position="397"/>
        <end position="399"/>
    </location>
</feature>
<feature type="strand" evidence="10">
    <location>
        <begin position="402"/>
        <end position="407"/>
    </location>
</feature>
<feature type="strand" evidence="10">
    <location>
        <begin position="411"/>
        <end position="418"/>
    </location>
</feature>
<feature type="strand" evidence="10">
    <location>
        <begin position="421"/>
        <end position="428"/>
    </location>
</feature>
<feature type="turn" evidence="10">
    <location>
        <begin position="434"/>
        <end position="436"/>
    </location>
</feature>
<feature type="strand" evidence="9">
    <location>
        <begin position="446"/>
        <end position="448"/>
    </location>
</feature>
<reference key="1">
    <citation type="journal article" date="1996" name="Yeast">
        <title>The sequence of 55 kb on the left arm of yeast chromosome XVI identifies a small nuclear RNA, a new putative protein kinase and two new putative regulators.</title>
        <authorList>
            <person name="Purnelle B."/>
            <person name="Coster F."/>
            <person name="Goffeau A."/>
        </authorList>
    </citation>
    <scope>NUCLEOTIDE SEQUENCE [GENOMIC DNA]</scope>
    <source>
        <strain>ATCC 204511 / S288c / AB972</strain>
    </source>
</reference>
<reference key="2">
    <citation type="journal article" date="1997" name="Nature">
        <title>The nucleotide sequence of Saccharomyces cerevisiae chromosome XVI.</title>
        <authorList>
            <person name="Bussey H."/>
            <person name="Storms R.K."/>
            <person name="Ahmed A."/>
            <person name="Albermann K."/>
            <person name="Allen E."/>
            <person name="Ansorge W."/>
            <person name="Araujo R."/>
            <person name="Aparicio A."/>
            <person name="Barrell B.G."/>
            <person name="Badcock K."/>
            <person name="Benes V."/>
            <person name="Botstein D."/>
            <person name="Bowman S."/>
            <person name="Brueckner M."/>
            <person name="Carpenter J."/>
            <person name="Cherry J.M."/>
            <person name="Chung E."/>
            <person name="Churcher C.M."/>
            <person name="Coster F."/>
            <person name="Davis K."/>
            <person name="Davis R.W."/>
            <person name="Dietrich F.S."/>
            <person name="Delius H."/>
            <person name="DiPaolo T."/>
            <person name="Dubois E."/>
            <person name="Duesterhoeft A."/>
            <person name="Duncan M."/>
            <person name="Floeth M."/>
            <person name="Fortin N."/>
            <person name="Friesen J.D."/>
            <person name="Fritz C."/>
            <person name="Goffeau A."/>
            <person name="Hall J."/>
            <person name="Hebling U."/>
            <person name="Heumann K."/>
            <person name="Hilbert H."/>
            <person name="Hillier L.W."/>
            <person name="Hunicke-Smith S."/>
            <person name="Hyman R.W."/>
            <person name="Johnston M."/>
            <person name="Kalman S."/>
            <person name="Kleine K."/>
            <person name="Komp C."/>
            <person name="Kurdi O."/>
            <person name="Lashkari D."/>
            <person name="Lew H."/>
            <person name="Lin A."/>
            <person name="Lin D."/>
            <person name="Louis E.J."/>
            <person name="Marathe R."/>
            <person name="Messenguy F."/>
            <person name="Mewes H.-W."/>
            <person name="Mirtipati S."/>
            <person name="Moestl D."/>
            <person name="Mueller-Auer S."/>
            <person name="Namath A."/>
            <person name="Nentwich U."/>
            <person name="Oefner P."/>
            <person name="Pearson D."/>
            <person name="Petel F.X."/>
            <person name="Pohl T.M."/>
            <person name="Purnelle B."/>
            <person name="Rajandream M.A."/>
            <person name="Rechmann S."/>
            <person name="Rieger M."/>
            <person name="Riles L."/>
            <person name="Roberts D."/>
            <person name="Schaefer M."/>
            <person name="Scharfe M."/>
            <person name="Scherens B."/>
            <person name="Schramm S."/>
            <person name="Schroeder M."/>
            <person name="Sdicu A.-M."/>
            <person name="Tettelin H."/>
            <person name="Urrestarazu L.A."/>
            <person name="Ushinsky S."/>
            <person name="Vierendeels F."/>
            <person name="Vissers S."/>
            <person name="Voss H."/>
            <person name="Walsh S.V."/>
            <person name="Wambutt R."/>
            <person name="Wang Y."/>
            <person name="Wedler E."/>
            <person name="Wedler H."/>
            <person name="Winnett E."/>
            <person name="Zhong W.-W."/>
            <person name="Zollner A."/>
            <person name="Vo D.H."/>
            <person name="Hani J."/>
        </authorList>
    </citation>
    <scope>NUCLEOTIDE SEQUENCE [LARGE SCALE GENOMIC DNA]</scope>
    <source>
        <strain>ATCC 204508 / S288c</strain>
    </source>
</reference>
<reference key="3">
    <citation type="journal article" date="2014" name="G3 (Bethesda)">
        <title>The reference genome sequence of Saccharomyces cerevisiae: Then and now.</title>
        <authorList>
            <person name="Engel S.R."/>
            <person name="Dietrich F.S."/>
            <person name="Fisk D.G."/>
            <person name="Binkley G."/>
            <person name="Balakrishnan R."/>
            <person name="Costanzo M.C."/>
            <person name="Dwight S.S."/>
            <person name="Hitz B.C."/>
            <person name="Karra K."/>
            <person name="Nash R.S."/>
            <person name="Weng S."/>
            <person name="Wong E.D."/>
            <person name="Lloyd P."/>
            <person name="Skrzypek M.S."/>
            <person name="Miyasato S.R."/>
            <person name="Simison M."/>
            <person name="Cherry J.M."/>
        </authorList>
    </citation>
    <scope>GENOME REANNOTATION</scope>
    <source>
        <strain>ATCC 204508 / S288c</strain>
    </source>
</reference>
<reference key="4">
    <citation type="journal article" date="2000" name="Electrophoresis">
        <title>A proteomic approach for the study of Saccharomyces cerevisiae cell wall biogenesis.</title>
        <authorList>
            <person name="Pardo M."/>
            <person name="Ward M."/>
            <person name="Bains S."/>
            <person name="Molina M."/>
            <person name="Blackstock W."/>
            <person name="Gil C."/>
            <person name="Nombela C."/>
        </authorList>
    </citation>
    <scope>PARTIAL PROTEIN SEQUENCE</scope>
    <scope>IDENTIFICATION BY MASS SPECTROMETRY</scope>
</reference>
<reference key="5">
    <citation type="journal article" date="2002" name="Mol. Cell. Biol.">
        <title>Proteomics analysis reveals stable multiprotein complexes in both fission and budding yeasts containing Myb-related Cdc5p/Cef1p, novel pre-mRNA splicing factors, and snRNAs.</title>
        <authorList>
            <person name="Ohi M.D."/>
            <person name="Link A.J."/>
            <person name="Ren L."/>
            <person name="Jennings J.L."/>
            <person name="McDonald W.H."/>
            <person name="Gould K.L."/>
        </authorList>
    </citation>
    <scope>IDENTIFICATION IN THE CWC COMPLEX</scope>
    <scope>IDENTIFICATION BY MASS SPECTROMETRY</scope>
</reference>
<reference key="6">
    <citation type="journal article" date="2002" name="RNA">
        <title>Characterization of interactions among the Cef1p-Prp19p-associated splicing complex.</title>
        <authorList>
            <person name="Ohi M.D."/>
            <person name="Gould K.L."/>
        </authorList>
    </citation>
    <scope>INTERACTION WITH CEF1; CLF1; NTC20 AND SYF1</scope>
</reference>
<reference key="7">
    <citation type="journal article" date="2003" name="Mol. Cell">
        <title>Assigning function to yeast proteins by integration of technologies.</title>
        <authorList>
            <person name="Hazbun T.R."/>
            <person name="Malmstroem L."/>
            <person name="Anderson S."/>
            <person name="Graczyk B.J."/>
            <person name="Fox B."/>
            <person name="Riffle M."/>
            <person name="Sundin B.A."/>
            <person name="Aranda J.D."/>
            <person name="McDonald W.H."/>
            <person name="Chiu C.-H."/>
            <person name="Snydsman B.E."/>
            <person name="Bradley P."/>
            <person name="Muller E.G.D."/>
            <person name="Fields S."/>
            <person name="Baker D."/>
            <person name="Yates J.R. III"/>
            <person name="Davis T.N."/>
        </authorList>
    </citation>
    <scope>IDENTIFICATION BY MASS SPECTROMETRY</scope>
</reference>
<reference key="8">
    <citation type="journal article" date="2003" name="RNA">
        <title>Identification and characterization of Prp45p and Prp46p, essential pre-mRNA splicing factors.</title>
        <authorList>
            <person name="Albers M."/>
            <person name="Diment A."/>
            <person name="Muraru M."/>
            <person name="Russell C.S."/>
            <person name="Beggs J.D."/>
        </authorList>
    </citation>
    <scope>FUNCTION</scope>
    <scope>INTERACTION WITH PRP45</scope>
</reference>
<reference key="9">
    <citation type="journal article" date="2003" name="Nature">
        <title>Global analysis of protein localization in budding yeast.</title>
        <authorList>
            <person name="Huh W.-K."/>
            <person name="Falvo J.V."/>
            <person name="Gerke L.C."/>
            <person name="Carroll A.S."/>
            <person name="Howson R.W."/>
            <person name="Weissman J.S."/>
            <person name="O'Shea E.K."/>
        </authorList>
    </citation>
    <scope>SUBCELLULAR LOCATION [LARGE SCALE ANALYSIS]</scope>
</reference>
<reference key="10">
    <citation type="journal article" date="2003" name="Nature">
        <title>Global analysis of protein expression in yeast.</title>
        <authorList>
            <person name="Ghaemmaghami S."/>
            <person name="Huh W.-K."/>
            <person name="Bower K."/>
            <person name="Howson R.W."/>
            <person name="Belle A."/>
            <person name="Dephoure N."/>
            <person name="O'Shea E.K."/>
            <person name="Weissman J.S."/>
        </authorList>
    </citation>
    <scope>LEVEL OF PROTEIN EXPRESSION [LARGE SCALE ANALYSIS]</scope>
</reference>
<sequence length="451" mass="50700">MDGNDHKVENLGDVDKFYSRIRWNNQFSYMATLPPHLQSEMEGQKSLLMRYDTYRKESSSFSGEGKKVTLQHVPTDFSEASQAVISKKDHDTHASAFVNKIFQPEVAEELIVNRYEKLLSQRPEWHAPWKLSRVINGHLGWVRCVAIDPVDNEWFITGSNDTTMKVWDLATGKLKTTLAGHVMTVRDVAVSDRHPYLFSVSEDKTVKCWDLEKNQIIRDYYGHLSGVRTVSIHPTLDLIATAGRDSVIKLWDMRTRIPVITLVGHKGPINQVQCTPVDPQVVSSSTDATVRLWDVVAGKTMKVLTHHKRSVRATALHPKEFSVASACTDDIRSWGLAEGSLLTNFESEKTGIINTLSINQDDVLFAGGDNGVLSFYDYKSGHKYQSLATREMVGSLEGERSVLCSTFDKTGLRLITGEADKSIKIWKQDETATKESEPGLAWNPNLSAKRF</sequence>
<evidence type="ECO:0000250" key="1"/>
<evidence type="ECO:0000269" key="2">
    <source>
    </source>
</evidence>
<evidence type="ECO:0000269" key="3">
    <source>
    </source>
</evidence>
<evidence type="ECO:0000269" key="4">
    <source>
    </source>
</evidence>
<evidence type="ECO:0000269" key="5">
    <source>
    </source>
</evidence>
<evidence type="ECO:0000269" key="6">
    <source>
    </source>
</evidence>
<evidence type="ECO:0000305" key="7"/>
<evidence type="ECO:0007829" key="8">
    <source>
        <dbReference type="PDB" id="5GMK"/>
    </source>
</evidence>
<evidence type="ECO:0007829" key="9">
    <source>
        <dbReference type="PDB" id="6J6G"/>
    </source>
</evidence>
<evidence type="ECO:0007829" key="10">
    <source>
        <dbReference type="PDB" id="9DTR"/>
    </source>
</evidence>